<reference key="1">
    <citation type="submission" date="2006-03" db="EMBL/GenBank/DDBJ databases">
        <title>Complete sequence of chromosome of Nitrobacter hamburgensis X14.</title>
        <authorList>
            <consortium name="US DOE Joint Genome Institute"/>
            <person name="Copeland A."/>
            <person name="Lucas S."/>
            <person name="Lapidus A."/>
            <person name="Barry K."/>
            <person name="Detter J.C."/>
            <person name="Glavina del Rio T."/>
            <person name="Hammon N."/>
            <person name="Israni S."/>
            <person name="Dalin E."/>
            <person name="Tice H."/>
            <person name="Pitluck S."/>
            <person name="Chain P."/>
            <person name="Malfatti S."/>
            <person name="Shin M."/>
            <person name="Vergez L."/>
            <person name="Schmutz J."/>
            <person name="Larimer F."/>
            <person name="Land M."/>
            <person name="Hauser L."/>
            <person name="Kyrpides N."/>
            <person name="Ivanova N."/>
            <person name="Ward B."/>
            <person name="Arp D."/>
            <person name="Klotz M."/>
            <person name="Stein L."/>
            <person name="O'Mullan G."/>
            <person name="Starkenburg S."/>
            <person name="Sayavedra L."/>
            <person name="Poret-Peterson A.T."/>
            <person name="Gentry M.E."/>
            <person name="Bruce D."/>
            <person name="Richardson P."/>
        </authorList>
    </citation>
    <scope>NUCLEOTIDE SEQUENCE [LARGE SCALE GENOMIC DNA]</scope>
    <source>
        <strain>DSM 10229 / NCIMB 13809 / X14</strain>
    </source>
</reference>
<keyword id="KW-0046">Antibiotic resistance</keyword>
<keyword id="KW-0997">Cell inner membrane</keyword>
<keyword id="KW-1003">Cell membrane</keyword>
<keyword id="KW-0133">Cell shape</keyword>
<keyword id="KW-0961">Cell wall biogenesis/degradation</keyword>
<keyword id="KW-0378">Hydrolase</keyword>
<keyword id="KW-0472">Membrane</keyword>
<keyword id="KW-0573">Peptidoglycan synthesis</keyword>
<keyword id="KW-1185">Reference proteome</keyword>
<keyword id="KW-0812">Transmembrane</keyword>
<keyword id="KW-1133">Transmembrane helix</keyword>
<gene>
    <name evidence="1" type="primary">uppP</name>
    <name type="ordered locus">Nham_0184</name>
</gene>
<comment type="function">
    <text evidence="1">Catalyzes the dephosphorylation of undecaprenyl diphosphate (UPP). Confers resistance to bacitracin.</text>
</comment>
<comment type="catalytic activity">
    <reaction evidence="1">
        <text>di-trans,octa-cis-undecaprenyl diphosphate + H2O = di-trans,octa-cis-undecaprenyl phosphate + phosphate + H(+)</text>
        <dbReference type="Rhea" id="RHEA:28094"/>
        <dbReference type="ChEBI" id="CHEBI:15377"/>
        <dbReference type="ChEBI" id="CHEBI:15378"/>
        <dbReference type="ChEBI" id="CHEBI:43474"/>
        <dbReference type="ChEBI" id="CHEBI:58405"/>
        <dbReference type="ChEBI" id="CHEBI:60392"/>
        <dbReference type="EC" id="3.6.1.27"/>
    </reaction>
</comment>
<comment type="subcellular location">
    <subcellularLocation>
        <location evidence="1">Cell inner membrane</location>
        <topology evidence="1">Multi-pass membrane protein</topology>
    </subcellularLocation>
</comment>
<comment type="miscellaneous">
    <text>Bacitracin is thought to be involved in the inhibition of peptidoglycan synthesis by sequestering undecaprenyl diphosphate, thereby reducing the pool of lipid carrier available.</text>
</comment>
<comment type="similarity">
    <text evidence="1">Belongs to the UppP family.</text>
</comment>
<feature type="chain" id="PRO_0000290736" description="Undecaprenyl-diphosphatase">
    <location>
        <begin position="1"/>
        <end position="268"/>
    </location>
</feature>
<feature type="transmembrane region" description="Helical" evidence="1">
    <location>
        <begin position="43"/>
        <end position="63"/>
    </location>
</feature>
<feature type="transmembrane region" description="Helical" evidence="1">
    <location>
        <begin position="83"/>
        <end position="103"/>
    </location>
</feature>
<feature type="transmembrane region" description="Helical" evidence="1">
    <location>
        <begin position="109"/>
        <end position="129"/>
    </location>
</feature>
<feature type="transmembrane region" description="Helical" evidence="1">
    <location>
        <begin position="144"/>
        <end position="164"/>
    </location>
</feature>
<feature type="transmembrane region" description="Helical" evidence="1">
    <location>
        <begin position="184"/>
        <end position="204"/>
    </location>
</feature>
<feature type="transmembrane region" description="Helical" evidence="1">
    <location>
        <begin position="218"/>
        <end position="238"/>
    </location>
</feature>
<feature type="transmembrane region" description="Helical" evidence="1">
    <location>
        <begin position="246"/>
        <end position="266"/>
    </location>
</feature>
<sequence>MFSDAIRAVILGIVEGVTEFLPVSSTGHLLLAERFFDLGSGNFWNTFTVLIQLGAILAIVVIYFEKLWRIALGMFSNDADRRFVIGVLAAFLPAVVVGLIAGKYIKELLFNPWVVCFSLIVGGAVLMWVDQLDHKPHEHDATAFPLPMYIWIGIAQCLAMIPGVSRSGATIVSAMLLGADKRAAAEFSFFLAIPTMIGAFAYDFYKNRADMTTDHLGIVAIGFVVSFVTAIVVVKAFLSYVTRNGFTFFAWWRVIVGTLGLIALALGR</sequence>
<accession>Q1QRR2</accession>
<dbReference type="EC" id="3.6.1.27" evidence="1"/>
<dbReference type="EMBL" id="CP000319">
    <property type="protein sequence ID" value="ABE61085.1"/>
    <property type="molecule type" value="Genomic_DNA"/>
</dbReference>
<dbReference type="RefSeq" id="WP_011508791.1">
    <property type="nucleotide sequence ID" value="NC_007964.1"/>
</dbReference>
<dbReference type="SMR" id="Q1QRR2"/>
<dbReference type="STRING" id="323097.Nham_0184"/>
<dbReference type="KEGG" id="nha:Nham_0184"/>
<dbReference type="eggNOG" id="COG1968">
    <property type="taxonomic scope" value="Bacteria"/>
</dbReference>
<dbReference type="HOGENOM" id="CLU_060296_2_0_5"/>
<dbReference type="OrthoDB" id="9808289at2"/>
<dbReference type="Proteomes" id="UP000001953">
    <property type="component" value="Chromosome"/>
</dbReference>
<dbReference type="GO" id="GO:0005886">
    <property type="term" value="C:plasma membrane"/>
    <property type="evidence" value="ECO:0007669"/>
    <property type="project" value="UniProtKB-SubCell"/>
</dbReference>
<dbReference type="GO" id="GO:0050380">
    <property type="term" value="F:undecaprenyl-diphosphatase activity"/>
    <property type="evidence" value="ECO:0007669"/>
    <property type="project" value="UniProtKB-UniRule"/>
</dbReference>
<dbReference type="GO" id="GO:0071555">
    <property type="term" value="P:cell wall organization"/>
    <property type="evidence" value="ECO:0007669"/>
    <property type="project" value="UniProtKB-KW"/>
</dbReference>
<dbReference type="GO" id="GO:0009252">
    <property type="term" value="P:peptidoglycan biosynthetic process"/>
    <property type="evidence" value="ECO:0007669"/>
    <property type="project" value="UniProtKB-KW"/>
</dbReference>
<dbReference type="GO" id="GO:0008360">
    <property type="term" value="P:regulation of cell shape"/>
    <property type="evidence" value="ECO:0007669"/>
    <property type="project" value="UniProtKB-KW"/>
</dbReference>
<dbReference type="GO" id="GO:0046677">
    <property type="term" value="P:response to antibiotic"/>
    <property type="evidence" value="ECO:0007669"/>
    <property type="project" value="UniProtKB-UniRule"/>
</dbReference>
<dbReference type="HAMAP" id="MF_01006">
    <property type="entry name" value="Undec_diphosphatase"/>
    <property type="match status" value="1"/>
</dbReference>
<dbReference type="InterPro" id="IPR003824">
    <property type="entry name" value="UppP"/>
</dbReference>
<dbReference type="NCBIfam" id="NF001389">
    <property type="entry name" value="PRK00281.1-2"/>
    <property type="match status" value="1"/>
</dbReference>
<dbReference type="NCBIfam" id="NF001390">
    <property type="entry name" value="PRK00281.1-4"/>
    <property type="match status" value="1"/>
</dbReference>
<dbReference type="NCBIfam" id="TIGR00753">
    <property type="entry name" value="undec_PP_bacA"/>
    <property type="match status" value="1"/>
</dbReference>
<dbReference type="PANTHER" id="PTHR30622">
    <property type="entry name" value="UNDECAPRENYL-DIPHOSPHATASE"/>
    <property type="match status" value="1"/>
</dbReference>
<dbReference type="PANTHER" id="PTHR30622:SF3">
    <property type="entry name" value="UNDECAPRENYL-DIPHOSPHATASE"/>
    <property type="match status" value="1"/>
</dbReference>
<dbReference type="Pfam" id="PF02673">
    <property type="entry name" value="BacA"/>
    <property type="match status" value="1"/>
</dbReference>
<protein>
    <recommendedName>
        <fullName evidence="1">Undecaprenyl-diphosphatase</fullName>
        <ecNumber evidence="1">3.6.1.27</ecNumber>
    </recommendedName>
    <alternativeName>
        <fullName evidence="1">Bacitracin resistance protein</fullName>
    </alternativeName>
    <alternativeName>
        <fullName evidence="1">Undecaprenyl pyrophosphate phosphatase</fullName>
    </alternativeName>
</protein>
<evidence type="ECO:0000255" key="1">
    <source>
        <dbReference type="HAMAP-Rule" id="MF_01006"/>
    </source>
</evidence>
<name>UPPP_NITHX</name>
<organism>
    <name type="scientific">Nitrobacter hamburgensis (strain DSM 10229 / NCIMB 13809 / X14)</name>
    <dbReference type="NCBI Taxonomy" id="323097"/>
    <lineage>
        <taxon>Bacteria</taxon>
        <taxon>Pseudomonadati</taxon>
        <taxon>Pseudomonadota</taxon>
        <taxon>Alphaproteobacteria</taxon>
        <taxon>Hyphomicrobiales</taxon>
        <taxon>Nitrobacteraceae</taxon>
        <taxon>Nitrobacter</taxon>
    </lineage>
</organism>
<proteinExistence type="inferred from homology"/>